<evidence type="ECO:0000250" key="1"/>
<evidence type="ECO:0000255" key="2">
    <source>
        <dbReference type="HAMAP-Rule" id="MF_00062"/>
    </source>
</evidence>
<gene>
    <name evidence="2" type="primary">cysN</name>
    <name type="ordered locus">EFER_0316</name>
</gene>
<comment type="function">
    <text evidence="2">With CysD forms the ATP sulfurylase (ATPS) that catalyzes the adenylation of sulfate producing adenosine 5'-phosphosulfate (APS) and diphosphate, the first enzymatic step in sulfur assimilation pathway. APS synthesis involves the formation of a high-energy phosphoric-sulfuric acid anhydride bond driven by GTP hydrolysis by CysN coupled to ATP hydrolysis by CysD.</text>
</comment>
<comment type="catalytic activity">
    <reaction evidence="2">
        <text>sulfate + ATP + H(+) = adenosine 5'-phosphosulfate + diphosphate</text>
        <dbReference type="Rhea" id="RHEA:18133"/>
        <dbReference type="ChEBI" id="CHEBI:15378"/>
        <dbReference type="ChEBI" id="CHEBI:16189"/>
        <dbReference type="ChEBI" id="CHEBI:30616"/>
        <dbReference type="ChEBI" id="CHEBI:33019"/>
        <dbReference type="ChEBI" id="CHEBI:58243"/>
        <dbReference type="EC" id="2.7.7.4"/>
    </reaction>
</comment>
<comment type="pathway">
    <text evidence="2">Sulfur metabolism; hydrogen sulfide biosynthesis; sulfite from sulfate: step 1/3.</text>
</comment>
<comment type="subunit">
    <text evidence="2">Heterodimer composed of CysD, the smaller subunit, and CysN.</text>
</comment>
<comment type="similarity">
    <text evidence="2">Belongs to the TRAFAC class translation factor GTPase superfamily. Classic translation factor GTPase family. CysN/NodQ subfamily.</text>
</comment>
<accession>B7LWK4</accession>
<name>CYSN_ESCF3</name>
<organism>
    <name type="scientific">Escherichia fergusonii (strain ATCC 35469 / DSM 13698 / CCUG 18766 / IAM 14443 / JCM 21226 / LMG 7866 / NBRC 102419 / NCTC 12128 / CDC 0568-73)</name>
    <dbReference type="NCBI Taxonomy" id="585054"/>
    <lineage>
        <taxon>Bacteria</taxon>
        <taxon>Pseudomonadati</taxon>
        <taxon>Pseudomonadota</taxon>
        <taxon>Gammaproteobacteria</taxon>
        <taxon>Enterobacterales</taxon>
        <taxon>Enterobacteriaceae</taxon>
        <taxon>Escherichia</taxon>
    </lineage>
</organism>
<feature type="chain" id="PRO_1000116942" description="Sulfate adenylyltransferase subunit 1">
    <location>
        <begin position="1"/>
        <end position="475"/>
    </location>
</feature>
<feature type="domain" description="tr-type G">
    <location>
        <begin position="25"/>
        <end position="239"/>
    </location>
</feature>
<feature type="region of interest" description="G1" evidence="1">
    <location>
        <begin position="34"/>
        <end position="41"/>
    </location>
</feature>
<feature type="region of interest" description="G2" evidence="1">
    <location>
        <begin position="92"/>
        <end position="96"/>
    </location>
</feature>
<feature type="region of interest" description="G3" evidence="1">
    <location>
        <begin position="113"/>
        <end position="116"/>
    </location>
</feature>
<feature type="region of interest" description="G4" evidence="1">
    <location>
        <begin position="168"/>
        <end position="171"/>
    </location>
</feature>
<feature type="region of interest" description="G5" evidence="1">
    <location>
        <begin position="206"/>
        <end position="208"/>
    </location>
</feature>
<feature type="binding site" evidence="2">
    <location>
        <begin position="34"/>
        <end position="41"/>
    </location>
    <ligand>
        <name>GTP</name>
        <dbReference type="ChEBI" id="CHEBI:37565"/>
    </ligand>
</feature>
<feature type="binding site" evidence="2">
    <location>
        <begin position="113"/>
        <end position="117"/>
    </location>
    <ligand>
        <name>GTP</name>
        <dbReference type="ChEBI" id="CHEBI:37565"/>
    </ligand>
</feature>
<feature type="binding site" evidence="2">
    <location>
        <begin position="168"/>
        <end position="171"/>
    </location>
    <ligand>
        <name>GTP</name>
        <dbReference type="ChEBI" id="CHEBI:37565"/>
    </ligand>
</feature>
<sequence>MNTVLAQQIANEGGVEAWMIAQQHKSLLRFLTCGSVDDGKSTLIGRLLHDTRQIYEDQLSSLHNDSKRHGTQGEKLDLALLVDGLQAEREQGITIDVAYRYFSTEKRKFIIADTPGHEQYTRNMATGASTCDLAILLIDARKGVLDQTRRHSFISTLLGIKHLIVAINKMDLVDYSEETFTRIREDYLTFAEQLPGNLDIRFVPLSALEGDNVASQSESMLWYSGPTLLEVLETVEIQRVVDAQPMRFPVQYVNRPNLDFRGYAGTLASGRVQVGQRVKVLPSGVESNVARIVTFDGDREEAFAGEAITLVLTDEIDISRGDLLLAADEVLPAVQSASVAVVWMAEQPLSPGQSYDIKIAGKKTRARVDGIRYQVDINNLTQREVENLSLNGIGLVDLTFDEPLVLDRYQQNPVTGGLIFIDRLSNVTVGAGMVHEPVSQATAAASEFSAFELELNALVRRHFPHWGARDLLGDK</sequence>
<keyword id="KW-0067">ATP-binding</keyword>
<keyword id="KW-0342">GTP-binding</keyword>
<keyword id="KW-0547">Nucleotide-binding</keyword>
<keyword id="KW-0548">Nucleotidyltransferase</keyword>
<keyword id="KW-0808">Transferase</keyword>
<protein>
    <recommendedName>
        <fullName evidence="2">Sulfate adenylyltransferase subunit 1</fullName>
        <ecNumber evidence="2">2.7.7.4</ecNumber>
    </recommendedName>
    <alternativeName>
        <fullName evidence="2">ATP-sulfurylase large subunit</fullName>
    </alternativeName>
    <alternativeName>
        <fullName evidence="2">Sulfate adenylate transferase</fullName>
        <shortName evidence="2">SAT</shortName>
    </alternativeName>
</protein>
<proteinExistence type="inferred from homology"/>
<reference key="1">
    <citation type="journal article" date="2009" name="PLoS Genet.">
        <title>Organised genome dynamics in the Escherichia coli species results in highly diverse adaptive paths.</title>
        <authorList>
            <person name="Touchon M."/>
            <person name="Hoede C."/>
            <person name="Tenaillon O."/>
            <person name="Barbe V."/>
            <person name="Baeriswyl S."/>
            <person name="Bidet P."/>
            <person name="Bingen E."/>
            <person name="Bonacorsi S."/>
            <person name="Bouchier C."/>
            <person name="Bouvet O."/>
            <person name="Calteau A."/>
            <person name="Chiapello H."/>
            <person name="Clermont O."/>
            <person name="Cruveiller S."/>
            <person name="Danchin A."/>
            <person name="Diard M."/>
            <person name="Dossat C."/>
            <person name="Karoui M.E."/>
            <person name="Frapy E."/>
            <person name="Garry L."/>
            <person name="Ghigo J.M."/>
            <person name="Gilles A.M."/>
            <person name="Johnson J."/>
            <person name="Le Bouguenec C."/>
            <person name="Lescat M."/>
            <person name="Mangenot S."/>
            <person name="Martinez-Jehanne V."/>
            <person name="Matic I."/>
            <person name="Nassif X."/>
            <person name="Oztas S."/>
            <person name="Petit M.A."/>
            <person name="Pichon C."/>
            <person name="Rouy Z."/>
            <person name="Ruf C.S."/>
            <person name="Schneider D."/>
            <person name="Tourret J."/>
            <person name="Vacherie B."/>
            <person name="Vallenet D."/>
            <person name="Medigue C."/>
            <person name="Rocha E.P.C."/>
            <person name="Denamur E."/>
        </authorList>
    </citation>
    <scope>NUCLEOTIDE SEQUENCE [LARGE SCALE GENOMIC DNA]</scope>
    <source>
        <strain>ATCC 35469 / DSM 13698 / BCRC 15582 / CCUG 18766 / IAM 14443 / JCM 21226 / LMG 7866 / NBRC 102419 / NCTC 12128 / CDC 0568-73</strain>
    </source>
</reference>
<dbReference type="EC" id="2.7.7.4" evidence="2"/>
<dbReference type="EMBL" id="CU928158">
    <property type="protein sequence ID" value="CAQ87880.1"/>
    <property type="molecule type" value="Genomic_DNA"/>
</dbReference>
<dbReference type="RefSeq" id="WP_001098966.1">
    <property type="nucleotide sequence ID" value="NC_011740.1"/>
</dbReference>
<dbReference type="SMR" id="B7LWK4"/>
<dbReference type="GeneID" id="75058611"/>
<dbReference type="KEGG" id="efe:EFER_0316"/>
<dbReference type="HOGENOM" id="CLU_007265_5_2_6"/>
<dbReference type="OrthoDB" id="9804504at2"/>
<dbReference type="UniPathway" id="UPA00140">
    <property type="reaction ID" value="UER00204"/>
</dbReference>
<dbReference type="Proteomes" id="UP000000745">
    <property type="component" value="Chromosome"/>
</dbReference>
<dbReference type="GO" id="GO:0005524">
    <property type="term" value="F:ATP binding"/>
    <property type="evidence" value="ECO:0007669"/>
    <property type="project" value="UniProtKB-KW"/>
</dbReference>
<dbReference type="GO" id="GO:0005525">
    <property type="term" value="F:GTP binding"/>
    <property type="evidence" value="ECO:0007669"/>
    <property type="project" value="UniProtKB-UniRule"/>
</dbReference>
<dbReference type="GO" id="GO:0003924">
    <property type="term" value="F:GTPase activity"/>
    <property type="evidence" value="ECO:0007669"/>
    <property type="project" value="InterPro"/>
</dbReference>
<dbReference type="GO" id="GO:0004781">
    <property type="term" value="F:sulfate adenylyltransferase (ATP) activity"/>
    <property type="evidence" value="ECO:0007669"/>
    <property type="project" value="UniProtKB-UniRule"/>
</dbReference>
<dbReference type="GO" id="GO:0070814">
    <property type="term" value="P:hydrogen sulfide biosynthetic process"/>
    <property type="evidence" value="ECO:0007669"/>
    <property type="project" value="UniProtKB-UniRule"/>
</dbReference>
<dbReference type="GO" id="GO:0000103">
    <property type="term" value="P:sulfate assimilation"/>
    <property type="evidence" value="ECO:0007669"/>
    <property type="project" value="UniProtKB-UniRule"/>
</dbReference>
<dbReference type="CDD" id="cd04166">
    <property type="entry name" value="CysN_ATPS"/>
    <property type="match status" value="1"/>
</dbReference>
<dbReference type="CDD" id="cd03695">
    <property type="entry name" value="CysN_NodQ_II"/>
    <property type="match status" value="1"/>
</dbReference>
<dbReference type="CDD" id="cd04095">
    <property type="entry name" value="CysN_NoDQ_III"/>
    <property type="match status" value="1"/>
</dbReference>
<dbReference type="FunFam" id="2.40.30.10:FF:000027">
    <property type="entry name" value="Sulfate adenylyltransferase subunit 1"/>
    <property type="match status" value="1"/>
</dbReference>
<dbReference type="FunFam" id="2.40.30.10:FF:000031">
    <property type="entry name" value="Sulfate adenylyltransferase subunit 1"/>
    <property type="match status" value="1"/>
</dbReference>
<dbReference type="FunFam" id="3.40.50.300:FF:000119">
    <property type="entry name" value="Sulfate adenylyltransferase subunit 1"/>
    <property type="match status" value="1"/>
</dbReference>
<dbReference type="Gene3D" id="3.40.50.300">
    <property type="entry name" value="P-loop containing nucleotide triphosphate hydrolases"/>
    <property type="match status" value="1"/>
</dbReference>
<dbReference type="Gene3D" id="2.40.30.10">
    <property type="entry name" value="Translation factors"/>
    <property type="match status" value="2"/>
</dbReference>
<dbReference type="HAMAP" id="MF_00062">
    <property type="entry name" value="Sulf_adenylyltr_sub1"/>
    <property type="match status" value="1"/>
</dbReference>
<dbReference type="InterPro" id="IPR041757">
    <property type="entry name" value="CysN_GTP-bd"/>
</dbReference>
<dbReference type="InterPro" id="IPR044138">
    <property type="entry name" value="CysN_II"/>
</dbReference>
<dbReference type="InterPro" id="IPR044139">
    <property type="entry name" value="CysN_NoDQ_III"/>
</dbReference>
<dbReference type="InterPro" id="IPR031157">
    <property type="entry name" value="G_TR_CS"/>
</dbReference>
<dbReference type="InterPro" id="IPR054696">
    <property type="entry name" value="GTP-eEF1A_C"/>
</dbReference>
<dbReference type="InterPro" id="IPR027417">
    <property type="entry name" value="P-loop_NTPase"/>
</dbReference>
<dbReference type="InterPro" id="IPR005225">
    <property type="entry name" value="Small_GTP-bd"/>
</dbReference>
<dbReference type="InterPro" id="IPR011779">
    <property type="entry name" value="SO4_adenylTrfase_lsu"/>
</dbReference>
<dbReference type="InterPro" id="IPR000795">
    <property type="entry name" value="T_Tr_GTP-bd_dom"/>
</dbReference>
<dbReference type="InterPro" id="IPR050100">
    <property type="entry name" value="TRAFAC_GTPase_members"/>
</dbReference>
<dbReference type="InterPro" id="IPR009000">
    <property type="entry name" value="Transl_B-barrel_sf"/>
</dbReference>
<dbReference type="InterPro" id="IPR009001">
    <property type="entry name" value="Transl_elong_EF1A/Init_IF2_C"/>
</dbReference>
<dbReference type="NCBIfam" id="TIGR02034">
    <property type="entry name" value="CysN"/>
    <property type="match status" value="1"/>
</dbReference>
<dbReference type="NCBIfam" id="NF003478">
    <property type="entry name" value="PRK05124.1"/>
    <property type="match status" value="1"/>
</dbReference>
<dbReference type="NCBIfam" id="TIGR00231">
    <property type="entry name" value="small_GTP"/>
    <property type="match status" value="1"/>
</dbReference>
<dbReference type="PANTHER" id="PTHR23115">
    <property type="entry name" value="TRANSLATION FACTOR"/>
    <property type="match status" value="1"/>
</dbReference>
<dbReference type="Pfam" id="PF22594">
    <property type="entry name" value="GTP-eEF1A_C"/>
    <property type="match status" value="1"/>
</dbReference>
<dbReference type="Pfam" id="PF00009">
    <property type="entry name" value="GTP_EFTU"/>
    <property type="match status" value="1"/>
</dbReference>
<dbReference type="PRINTS" id="PR00315">
    <property type="entry name" value="ELONGATNFCT"/>
</dbReference>
<dbReference type="SUPFAM" id="SSF50465">
    <property type="entry name" value="EF-Tu/eEF-1alpha/eIF2-gamma C-terminal domain"/>
    <property type="match status" value="1"/>
</dbReference>
<dbReference type="SUPFAM" id="SSF52540">
    <property type="entry name" value="P-loop containing nucleoside triphosphate hydrolases"/>
    <property type="match status" value="1"/>
</dbReference>
<dbReference type="SUPFAM" id="SSF50447">
    <property type="entry name" value="Translation proteins"/>
    <property type="match status" value="1"/>
</dbReference>
<dbReference type="PROSITE" id="PS00301">
    <property type="entry name" value="G_TR_1"/>
    <property type="match status" value="1"/>
</dbReference>
<dbReference type="PROSITE" id="PS51722">
    <property type="entry name" value="G_TR_2"/>
    <property type="match status" value="1"/>
</dbReference>